<gene>
    <name evidence="1" type="primary">rpsC</name>
    <name type="ordered locus">PGN_1862</name>
</gene>
<comment type="function">
    <text evidence="1">Binds the lower part of the 30S subunit head. Binds mRNA in the 70S ribosome, positioning it for translation.</text>
</comment>
<comment type="subunit">
    <text evidence="1">Part of the 30S ribosomal subunit. Forms a tight complex with proteins S10 and S14.</text>
</comment>
<comment type="similarity">
    <text evidence="1">Belongs to the universal ribosomal protein uS3 family.</text>
</comment>
<proteinExistence type="inferred from homology"/>
<feature type="chain" id="PRO_1000141002" description="Small ribosomal subunit protein uS3">
    <location>
        <begin position="1"/>
        <end position="246"/>
    </location>
</feature>
<feature type="domain" description="KH type-2" evidence="1">
    <location>
        <begin position="38"/>
        <end position="106"/>
    </location>
</feature>
<feature type="region of interest" description="Disordered" evidence="2">
    <location>
        <begin position="218"/>
        <end position="246"/>
    </location>
</feature>
<reference key="1">
    <citation type="journal article" date="2008" name="DNA Res.">
        <title>Determination of the genome sequence of Porphyromonas gingivalis strain ATCC 33277 and genomic comparison with strain W83 revealed extensive genome rearrangements in P. gingivalis.</title>
        <authorList>
            <person name="Naito M."/>
            <person name="Hirakawa H."/>
            <person name="Yamashita A."/>
            <person name="Ohara N."/>
            <person name="Shoji M."/>
            <person name="Yukitake H."/>
            <person name="Nakayama K."/>
            <person name="Toh H."/>
            <person name="Yoshimura F."/>
            <person name="Kuhara S."/>
            <person name="Hattori M."/>
            <person name="Hayashi T."/>
            <person name="Nakayama K."/>
        </authorList>
    </citation>
    <scope>NUCLEOTIDE SEQUENCE [LARGE SCALE GENOMIC DNA]</scope>
    <source>
        <strain>ATCC 33277 / DSM 20709 / CIP 103683 / JCM 12257 / NCTC 11834 / 2561</strain>
    </source>
</reference>
<protein>
    <recommendedName>
        <fullName evidence="1">Small ribosomal subunit protein uS3</fullName>
    </recommendedName>
    <alternativeName>
        <fullName evidence="3">30S ribosomal protein S3</fullName>
    </alternativeName>
</protein>
<evidence type="ECO:0000255" key="1">
    <source>
        <dbReference type="HAMAP-Rule" id="MF_01309"/>
    </source>
</evidence>
<evidence type="ECO:0000256" key="2">
    <source>
        <dbReference type="SAM" id="MobiDB-lite"/>
    </source>
</evidence>
<evidence type="ECO:0000305" key="3"/>
<keyword id="KW-0687">Ribonucleoprotein</keyword>
<keyword id="KW-0689">Ribosomal protein</keyword>
<keyword id="KW-0694">RNA-binding</keyword>
<keyword id="KW-0699">rRNA-binding</keyword>
<accession>B2RLY6</accession>
<organism>
    <name type="scientific">Porphyromonas gingivalis (strain ATCC 33277 / DSM 20709 / CIP 103683 / JCM 12257 / NCTC 11834 / 2561)</name>
    <dbReference type="NCBI Taxonomy" id="431947"/>
    <lineage>
        <taxon>Bacteria</taxon>
        <taxon>Pseudomonadati</taxon>
        <taxon>Bacteroidota</taxon>
        <taxon>Bacteroidia</taxon>
        <taxon>Bacteroidales</taxon>
        <taxon>Porphyromonadaceae</taxon>
        <taxon>Porphyromonas</taxon>
    </lineage>
</organism>
<name>RS3_PORG3</name>
<sequence length="246" mass="27570">MGQKINPVSNRLGIIRGWDSNWYGGRKYGETLLEDSRIRQYLNARLAKASVSRIVIERALKLVTITICTARPGMIIGKAGQEVDKLKEELKRITKKDVQINIYEIRKPELDAAIVAENIARQLEGKIAYRRAVKMAIASAMRMGAEGIKIQVSGRLNGAEMARSEMFKEGRTPLHTLRADIDYALAEALTKVGLLGIKVWICKGEVYEKRDLAPNFAVAKNQSRRPNAQGGNNRGGDRNRRRKGNR</sequence>
<dbReference type="EMBL" id="AP009380">
    <property type="protein sequence ID" value="BAG34381.1"/>
    <property type="molecule type" value="Genomic_DNA"/>
</dbReference>
<dbReference type="RefSeq" id="WP_004583592.1">
    <property type="nucleotide sequence ID" value="NZ_CP025930.1"/>
</dbReference>
<dbReference type="SMR" id="B2RLY6"/>
<dbReference type="GeneID" id="57239590"/>
<dbReference type="KEGG" id="pgn:PGN_1862"/>
<dbReference type="eggNOG" id="COG0092">
    <property type="taxonomic scope" value="Bacteria"/>
</dbReference>
<dbReference type="HOGENOM" id="CLU_058591_0_2_10"/>
<dbReference type="OrthoDB" id="9806396at2"/>
<dbReference type="BioCyc" id="PGIN431947:G1G2V-2076-MONOMER"/>
<dbReference type="Proteomes" id="UP000008842">
    <property type="component" value="Chromosome"/>
</dbReference>
<dbReference type="GO" id="GO:0022627">
    <property type="term" value="C:cytosolic small ribosomal subunit"/>
    <property type="evidence" value="ECO:0007669"/>
    <property type="project" value="TreeGrafter"/>
</dbReference>
<dbReference type="GO" id="GO:0003729">
    <property type="term" value="F:mRNA binding"/>
    <property type="evidence" value="ECO:0007669"/>
    <property type="project" value="UniProtKB-UniRule"/>
</dbReference>
<dbReference type="GO" id="GO:0019843">
    <property type="term" value="F:rRNA binding"/>
    <property type="evidence" value="ECO:0007669"/>
    <property type="project" value="UniProtKB-UniRule"/>
</dbReference>
<dbReference type="GO" id="GO:0003735">
    <property type="term" value="F:structural constituent of ribosome"/>
    <property type="evidence" value="ECO:0007669"/>
    <property type="project" value="InterPro"/>
</dbReference>
<dbReference type="GO" id="GO:0006412">
    <property type="term" value="P:translation"/>
    <property type="evidence" value="ECO:0007669"/>
    <property type="project" value="UniProtKB-UniRule"/>
</dbReference>
<dbReference type="CDD" id="cd02412">
    <property type="entry name" value="KH-II_30S_S3"/>
    <property type="match status" value="1"/>
</dbReference>
<dbReference type="FunFam" id="3.30.1140.32:FF:000007">
    <property type="entry name" value="30S ribosomal protein S3"/>
    <property type="match status" value="1"/>
</dbReference>
<dbReference type="FunFam" id="3.30.300.20:FF:000001">
    <property type="entry name" value="30S ribosomal protein S3"/>
    <property type="match status" value="1"/>
</dbReference>
<dbReference type="Gene3D" id="3.30.300.20">
    <property type="match status" value="1"/>
</dbReference>
<dbReference type="Gene3D" id="3.30.1140.32">
    <property type="entry name" value="Ribosomal protein S3, C-terminal domain"/>
    <property type="match status" value="1"/>
</dbReference>
<dbReference type="HAMAP" id="MF_01309_B">
    <property type="entry name" value="Ribosomal_uS3_B"/>
    <property type="match status" value="1"/>
</dbReference>
<dbReference type="InterPro" id="IPR004087">
    <property type="entry name" value="KH_dom"/>
</dbReference>
<dbReference type="InterPro" id="IPR015946">
    <property type="entry name" value="KH_dom-like_a/b"/>
</dbReference>
<dbReference type="InterPro" id="IPR004044">
    <property type="entry name" value="KH_dom_type_2"/>
</dbReference>
<dbReference type="InterPro" id="IPR009019">
    <property type="entry name" value="KH_sf_prok-type"/>
</dbReference>
<dbReference type="InterPro" id="IPR036419">
    <property type="entry name" value="Ribosomal_S3_C_sf"/>
</dbReference>
<dbReference type="InterPro" id="IPR005704">
    <property type="entry name" value="Ribosomal_uS3_bac-typ"/>
</dbReference>
<dbReference type="InterPro" id="IPR001351">
    <property type="entry name" value="Ribosomal_uS3_C"/>
</dbReference>
<dbReference type="InterPro" id="IPR018280">
    <property type="entry name" value="Ribosomal_uS3_CS"/>
</dbReference>
<dbReference type="NCBIfam" id="TIGR01009">
    <property type="entry name" value="rpsC_bact"/>
    <property type="match status" value="1"/>
</dbReference>
<dbReference type="PANTHER" id="PTHR11760">
    <property type="entry name" value="30S/40S RIBOSOMAL PROTEIN S3"/>
    <property type="match status" value="1"/>
</dbReference>
<dbReference type="PANTHER" id="PTHR11760:SF19">
    <property type="entry name" value="SMALL RIBOSOMAL SUBUNIT PROTEIN US3C"/>
    <property type="match status" value="1"/>
</dbReference>
<dbReference type="Pfam" id="PF07650">
    <property type="entry name" value="KH_2"/>
    <property type="match status" value="1"/>
</dbReference>
<dbReference type="Pfam" id="PF00189">
    <property type="entry name" value="Ribosomal_S3_C"/>
    <property type="match status" value="1"/>
</dbReference>
<dbReference type="SMART" id="SM00322">
    <property type="entry name" value="KH"/>
    <property type="match status" value="1"/>
</dbReference>
<dbReference type="SUPFAM" id="SSF54814">
    <property type="entry name" value="Prokaryotic type KH domain (KH-domain type II)"/>
    <property type="match status" value="1"/>
</dbReference>
<dbReference type="SUPFAM" id="SSF54821">
    <property type="entry name" value="Ribosomal protein S3 C-terminal domain"/>
    <property type="match status" value="1"/>
</dbReference>
<dbReference type="PROSITE" id="PS50823">
    <property type="entry name" value="KH_TYPE_2"/>
    <property type="match status" value="1"/>
</dbReference>
<dbReference type="PROSITE" id="PS00548">
    <property type="entry name" value="RIBOSOMAL_S3"/>
    <property type="match status" value="1"/>
</dbReference>